<proteinExistence type="inferred from homology"/>
<keyword id="KW-0963">Cytoplasm</keyword>
<keyword id="KW-0223">Dioxygenase</keyword>
<keyword id="KW-0275">Fatty acid biosynthesis</keyword>
<keyword id="KW-0276">Fatty acid metabolism</keyword>
<keyword id="KW-0408">Iron</keyword>
<keyword id="KW-0444">Lipid biosynthesis</keyword>
<keyword id="KW-0443">Lipid metabolism</keyword>
<keyword id="KW-0479">Metal-binding</keyword>
<keyword id="KW-0560">Oxidoreductase</keyword>
<keyword id="KW-0925">Oxylipin biosynthesis</keyword>
<gene>
    <name type="primary">LOXA</name>
    <name type="synonym">LOX1</name>
</gene>
<reference key="1">
    <citation type="journal article" date="1994" name="Plant J.">
        <title>Complex spatial and temporal expression of lipoxygenase genes during Phaseolus vulgaris (L.) development.</title>
        <authorList>
            <person name="Eiben H.G."/>
            <person name="Slusarenko A.J."/>
        </authorList>
    </citation>
    <scope>NUCLEOTIDE SEQUENCE [GENOMIC DNA]</scope>
    <source>
        <strain>cv. Red Mexican</strain>
        <tissue>Leaf</tissue>
    </source>
</reference>
<organism>
    <name type="scientific">Phaseolus vulgaris</name>
    <name type="common">Kidney bean</name>
    <name type="synonym">French bean</name>
    <dbReference type="NCBI Taxonomy" id="3885"/>
    <lineage>
        <taxon>Eukaryota</taxon>
        <taxon>Viridiplantae</taxon>
        <taxon>Streptophyta</taxon>
        <taxon>Embryophyta</taxon>
        <taxon>Tracheophyta</taxon>
        <taxon>Spermatophyta</taxon>
        <taxon>Magnoliopsida</taxon>
        <taxon>eudicotyledons</taxon>
        <taxon>Gunneridae</taxon>
        <taxon>Pentapetalae</taxon>
        <taxon>rosids</taxon>
        <taxon>fabids</taxon>
        <taxon>Fabales</taxon>
        <taxon>Fabaceae</taxon>
        <taxon>Papilionoideae</taxon>
        <taxon>50 kb inversion clade</taxon>
        <taxon>NPAAA clade</taxon>
        <taxon>indigoferoid/millettioid clade</taxon>
        <taxon>Phaseoleae</taxon>
        <taxon>Phaseolus</taxon>
    </lineage>
</organism>
<dbReference type="EC" id="1.13.11.58"/>
<dbReference type="EC" id="1.13.11.12"/>
<dbReference type="EMBL" id="X63525">
    <property type="protein sequence ID" value="CAA45088.1"/>
    <property type="molecule type" value="Genomic_DNA"/>
</dbReference>
<dbReference type="PIR" id="S22153">
    <property type="entry name" value="S22153"/>
</dbReference>
<dbReference type="SMR" id="P27480"/>
<dbReference type="ProMEX" id="P27480"/>
<dbReference type="eggNOG" id="ENOG502QQSP">
    <property type="taxonomic scope" value="Eukaryota"/>
</dbReference>
<dbReference type="SABIO-RK" id="P27480"/>
<dbReference type="UniPathway" id="UPA00382"/>
<dbReference type="GO" id="GO:0005737">
    <property type="term" value="C:cytoplasm"/>
    <property type="evidence" value="ECO:0007669"/>
    <property type="project" value="UniProtKB-SubCell"/>
</dbReference>
<dbReference type="GO" id="GO:0016165">
    <property type="term" value="F:linoleate 13S-lipoxygenase activity"/>
    <property type="evidence" value="ECO:0007669"/>
    <property type="project" value="UniProtKB-EC"/>
</dbReference>
<dbReference type="GO" id="GO:1990136">
    <property type="term" value="F:linoleate 9S-lipoxygenase activity"/>
    <property type="evidence" value="ECO:0007669"/>
    <property type="project" value="UniProtKB-EC"/>
</dbReference>
<dbReference type="GO" id="GO:0046872">
    <property type="term" value="F:metal ion binding"/>
    <property type="evidence" value="ECO:0007669"/>
    <property type="project" value="UniProtKB-KW"/>
</dbReference>
<dbReference type="GO" id="GO:0006633">
    <property type="term" value="P:fatty acid biosynthetic process"/>
    <property type="evidence" value="ECO:0007669"/>
    <property type="project" value="UniProtKB-KW"/>
</dbReference>
<dbReference type="GO" id="GO:0034440">
    <property type="term" value="P:lipid oxidation"/>
    <property type="evidence" value="ECO:0007669"/>
    <property type="project" value="InterPro"/>
</dbReference>
<dbReference type="GO" id="GO:0031408">
    <property type="term" value="P:oxylipin biosynthetic process"/>
    <property type="evidence" value="ECO:0007669"/>
    <property type="project" value="UniProtKB-UniPathway"/>
</dbReference>
<dbReference type="CDD" id="cd01751">
    <property type="entry name" value="PLAT_LH2"/>
    <property type="match status" value="1"/>
</dbReference>
<dbReference type="FunFam" id="1.20.245.10:FF:000002">
    <property type="entry name" value="Lipoxygenase"/>
    <property type="match status" value="1"/>
</dbReference>
<dbReference type="FunFam" id="3.10.450.60:FF:000002">
    <property type="entry name" value="Lipoxygenase"/>
    <property type="match status" value="1"/>
</dbReference>
<dbReference type="FunFam" id="4.10.375.10:FF:000001">
    <property type="entry name" value="Lipoxygenase"/>
    <property type="match status" value="1"/>
</dbReference>
<dbReference type="Gene3D" id="3.10.450.60">
    <property type="match status" value="1"/>
</dbReference>
<dbReference type="Gene3D" id="4.10.375.10">
    <property type="entry name" value="Lipoxygenase-1, Domain 2"/>
    <property type="match status" value="1"/>
</dbReference>
<dbReference type="Gene3D" id="4.10.372.10">
    <property type="entry name" value="Lipoxygenase-1, Domain 3"/>
    <property type="match status" value="1"/>
</dbReference>
<dbReference type="Gene3D" id="1.20.245.10">
    <property type="entry name" value="Lipoxygenase-1, Domain 5"/>
    <property type="match status" value="1"/>
</dbReference>
<dbReference type="Gene3D" id="2.60.60.20">
    <property type="entry name" value="PLAT/LH2 domain"/>
    <property type="match status" value="1"/>
</dbReference>
<dbReference type="InterPro" id="IPR000907">
    <property type="entry name" value="LipOase"/>
</dbReference>
<dbReference type="InterPro" id="IPR013819">
    <property type="entry name" value="LipOase_C"/>
</dbReference>
<dbReference type="InterPro" id="IPR036226">
    <property type="entry name" value="LipOase_C_sf"/>
</dbReference>
<dbReference type="InterPro" id="IPR020834">
    <property type="entry name" value="LipOase_CS"/>
</dbReference>
<dbReference type="InterPro" id="IPR020833">
    <property type="entry name" value="LipOase_Fe_BS"/>
</dbReference>
<dbReference type="InterPro" id="IPR001246">
    <property type="entry name" value="LipOase_plant"/>
</dbReference>
<dbReference type="InterPro" id="IPR042057">
    <property type="entry name" value="Lipoxy_PLAT/LH2"/>
</dbReference>
<dbReference type="InterPro" id="IPR027433">
    <property type="entry name" value="Lipoxygenase_dom_3"/>
</dbReference>
<dbReference type="InterPro" id="IPR001024">
    <property type="entry name" value="PLAT/LH2_dom"/>
</dbReference>
<dbReference type="InterPro" id="IPR036392">
    <property type="entry name" value="PLAT/LH2_dom_sf"/>
</dbReference>
<dbReference type="PANTHER" id="PTHR11771">
    <property type="entry name" value="LIPOXYGENASE"/>
    <property type="match status" value="1"/>
</dbReference>
<dbReference type="Pfam" id="PF00305">
    <property type="entry name" value="Lipoxygenase"/>
    <property type="match status" value="1"/>
</dbReference>
<dbReference type="Pfam" id="PF01477">
    <property type="entry name" value="PLAT"/>
    <property type="match status" value="1"/>
</dbReference>
<dbReference type="PRINTS" id="PR00087">
    <property type="entry name" value="LIPOXYGENASE"/>
</dbReference>
<dbReference type="PRINTS" id="PR00468">
    <property type="entry name" value="PLTLPOXGNASE"/>
</dbReference>
<dbReference type="SMART" id="SM00308">
    <property type="entry name" value="LH2"/>
    <property type="match status" value="1"/>
</dbReference>
<dbReference type="SUPFAM" id="SSF49723">
    <property type="entry name" value="Lipase/lipooxygenase domain (PLAT/LH2 domain)"/>
    <property type="match status" value="1"/>
</dbReference>
<dbReference type="SUPFAM" id="SSF48484">
    <property type="entry name" value="Lipoxigenase"/>
    <property type="match status" value="1"/>
</dbReference>
<dbReference type="PROSITE" id="PS00711">
    <property type="entry name" value="LIPOXYGENASE_1"/>
    <property type="match status" value="1"/>
</dbReference>
<dbReference type="PROSITE" id="PS00081">
    <property type="entry name" value="LIPOXYGENASE_2"/>
    <property type="match status" value="1"/>
</dbReference>
<dbReference type="PROSITE" id="PS51393">
    <property type="entry name" value="LIPOXYGENASE_3"/>
    <property type="match status" value="1"/>
</dbReference>
<dbReference type="PROSITE" id="PS50095">
    <property type="entry name" value="PLAT"/>
    <property type="match status" value="1"/>
</dbReference>
<evidence type="ECO:0000255" key="1">
    <source>
        <dbReference type="PROSITE-ProRule" id="PRU00152"/>
    </source>
</evidence>
<evidence type="ECO:0000255" key="2">
    <source>
        <dbReference type="PROSITE-ProRule" id="PRU00726"/>
    </source>
</evidence>
<evidence type="ECO:0000256" key="3">
    <source>
        <dbReference type="SAM" id="MobiDB-lite"/>
    </source>
</evidence>
<evidence type="ECO:0000305" key="4"/>
<feature type="chain" id="PRO_0000220715" description="Linoleate 9S-lipoxygenase 1">
    <location>
        <begin position="1"/>
        <end position="862"/>
    </location>
</feature>
<feature type="domain" description="PLAT" evidence="1">
    <location>
        <begin position="44"/>
        <end position="171"/>
    </location>
</feature>
<feature type="domain" description="Lipoxygenase" evidence="2">
    <location>
        <begin position="174"/>
        <end position="862"/>
    </location>
</feature>
<feature type="region of interest" description="Disordered" evidence="3">
    <location>
        <begin position="225"/>
        <end position="257"/>
    </location>
</feature>
<feature type="compositionally biased region" description="Basic residues" evidence="3">
    <location>
        <begin position="242"/>
        <end position="251"/>
    </location>
</feature>
<feature type="binding site" evidence="2">
    <location>
        <position position="522"/>
    </location>
    <ligand>
        <name>Fe cation</name>
        <dbReference type="ChEBI" id="CHEBI:24875"/>
        <note>catalytic</note>
    </ligand>
</feature>
<feature type="binding site" evidence="2">
    <location>
        <position position="527"/>
    </location>
    <ligand>
        <name>Fe cation</name>
        <dbReference type="ChEBI" id="CHEBI:24875"/>
        <note>catalytic</note>
    </ligand>
</feature>
<feature type="binding site" evidence="2">
    <location>
        <position position="713"/>
    </location>
    <ligand>
        <name>Fe cation</name>
        <dbReference type="ChEBI" id="CHEBI:24875"/>
        <note>catalytic</note>
    </ligand>
</feature>
<feature type="binding site" evidence="2">
    <location>
        <position position="717"/>
    </location>
    <ligand>
        <name>Fe cation</name>
        <dbReference type="ChEBI" id="CHEBI:24875"/>
        <note>catalytic</note>
    </ligand>
</feature>
<feature type="binding site" evidence="2">
    <location>
        <position position="862"/>
    </location>
    <ligand>
        <name>Fe cation</name>
        <dbReference type="ChEBI" id="CHEBI:24875"/>
        <note>catalytic</note>
    </ligand>
</feature>
<comment type="function">
    <text>Plant lipoxygenase may be involved in a number of diverse aspects of plant physiology including growth and development, pest resistance, and senescence or responses to wounding. It catalyzes the hydroperoxidation of lipids containing a cis,cis-1,4-pentadiene structure.</text>
</comment>
<comment type="catalytic activity">
    <reaction>
        <text>(9Z,12Z)-octadecadienoate + O2 = (13S)-hydroperoxy-(9Z,11E)-octadecadienoate</text>
        <dbReference type="Rhea" id="RHEA:22780"/>
        <dbReference type="ChEBI" id="CHEBI:15379"/>
        <dbReference type="ChEBI" id="CHEBI:30245"/>
        <dbReference type="ChEBI" id="CHEBI:57466"/>
        <dbReference type="EC" id="1.13.11.12"/>
    </reaction>
</comment>
<comment type="catalytic activity">
    <reaction>
        <text>(9Z,12Z,15Z)-octadecatrienoate + O2 = (13S)-hydroperoxy-(9Z,11E,15Z)-octadecatrienoate</text>
        <dbReference type="Rhea" id="RHEA:34495"/>
        <dbReference type="ChEBI" id="CHEBI:15379"/>
        <dbReference type="ChEBI" id="CHEBI:32387"/>
        <dbReference type="ChEBI" id="CHEBI:58757"/>
        <dbReference type="EC" id="1.13.11.12"/>
    </reaction>
</comment>
<comment type="catalytic activity">
    <reaction>
        <text>(9Z,12Z)-octadecadienoate + O2 = (9S)-hydroperoxy-(10E,12Z)-octadecadienoate</text>
        <dbReference type="Rhea" id="RHEA:30291"/>
        <dbReference type="ChEBI" id="CHEBI:15379"/>
        <dbReference type="ChEBI" id="CHEBI:30245"/>
        <dbReference type="ChEBI" id="CHEBI:60955"/>
        <dbReference type="EC" id="1.13.11.58"/>
    </reaction>
</comment>
<comment type="cofactor">
    <cofactor evidence="2">
        <name>Fe cation</name>
        <dbReference type="ChEBI" id="CHEBI:24875"/>
    </cofactor>
    <text evidence="2">Binds 1 Fe cation per subunit. Iron is tightly bound.</text>
</comment>
<comment type="pathway">
    <text evidence="2">Lipid metabolism; oxylipin biosynthesis.</text>
</comment>
<comment type="subunit">
    <text>Monomer.</text>
</comment>
<comment type="subcellular location">
    <subcellularLocation>
        <location>Cytoplasm</location>
    </subcellularLocation>
</comment>
<comment type="similarity">
    <text evidence="4">Belongs to the lipoxygenase family.</text>
</comment>
<name>LOXA_PHAVU</name>
<accession>P27480</accession>
<protein>
    <recommendedName>
        <fullName>Linoleate 9S-lipoxygenase 1</fullName>
        <ecNumber>1.13.11.58</ecNumber>
    </recommendedName>
    <alternativeName>
        <fullName>Lipoxygenase 1</fullName>
        <ecNumber>1.13.11.12</ecNumber>
    </alternativeName>
</protein>
<sequence length="862" mass="97155">MFGILNRGHKIKGTVVLMTKNVFDFNEFVSTTRGGIVGAAGGLFGAATDIVGGIVDGATAIFSRNIAIQLISATKTDGLGNGKVGKQTFLEKHLPSLPNLGDRQDAFNVYFEWDENFGIPEAFYIKNFMQSEFFLVSLTLEDIPNHGTIHFVCNSWVYNAKSYKRDRIFFANKTYLPNETPASLVKYRKEELENLRGDGTGERKEYDRIYDYAVYNDLGNPDKNKNLARTTLGGSSDFPYPRRGRTGRKSTRKDPKCEIPTSDTYIPRDENFGHLKSGDFLTYAIKSLTQNVLPTFQKAFGFNNEFDTFEDVRGLFEGGLYLPTDVISKISPIPVLKEILRTDGEQVLKFPPPHVIRVTKSAWMTDEEFGREMLAGVNPCLIQRLQEFPPKSKLDVTVYGDQTSTMTKEHLEINLGGLTVEEALHGNRLFILDHHDAFIPYLERINDLPTAKCYATRTILFLKDDNTLKPLAIELSLPNPGGKGANSRVILPADGGAESTIWLLAKAYVVVNDSCYHQLMSHWLNTHAVMEPFVIATNRHLSVLHPIYKLLLPHYRDTMNINALARQSLINAGGVIERSFLPGEFAVEMSSAVYKSWVFTDQALPADLIKRGMAVEDPSSPYGLRLVVEDYPYAVDGLEIWDTIQTWVKDYVSLYYPTNDAVKKDTELQAWWKEAVEKGHGDLKDKPWWPKLNTPQDLIHTCSIIIWIASALHAAVNFGQYPYGGFILNRPTITRRLLPEPGTKEYGELTSNYQKAYLRTITGKVEAIVDLSVIEILSRHASDEVYLGQRDNPNWTNNIKALQAFKRFGQKLKEIEEKIMGRNKDSSLRNRNGPVKMPYTVLLPTCEDEGLTFRGIPNSISI</sequence>